<reference key="1">
    <citation type="journal article" date="1988" name="J. Biol. Chem.">
        <title>Sequencing of the gene ant which affects the Na+/H+ antiporter activity in Escherichia coli.</title>
        <authorList>
            <person name="Karpel R."/>
            <person name="Olami Y."/>
            <person name="Taglicht D."/>
            <person name="Schuldiner S."/>
            <person name="Padan E."/>
        </authorList>
    </citation>
    <scope>NUCLEOTIDE SEQUENCE [GENOMIC DNA]</scope>
    <scope>FUNCTION</scope>
</reference>
<reference key="2">
    <citation type="submission" date="2000-02" db="EMBL/GenBank/DDBJ databases">
        <authorList>
            <person name="Padan E."/>
        </authorList>
    </citation>
    <scope>SEQUENCE REVISION</scope>
</reference>
<reference key="3">
    <citation type="journal article" date="1992" name="Nucleic Acids Res.">
        <title>Systematic sequencing of the Escherichia coli genome: analysis of the 0-2.4 min region.</title>
        <authorList>
            <person name="Yura T."/>
            <person name="Mori H."/>
            <person name="Nagai H."/>
            <person name="Nagata T."/>
            <person name="Ishihama A."/>
            <person name="Fujita N."/>
            <person name="Isono K."/>
            <person name="Mizobuchi K."/>
            <person name="Nakata A."/>
        </authorList>
    </citation>
    <scope>NUCLEOTIDE SEQUENCE [LARGE SCALE GENOMIC DNA]</scope>
    <source>
        <strain>K12</strain>
    </source>
</reference>
<reference key="4">
    <citation type="journal article" date="1997" name="Science">
        <title>The complete genome sequence of Escherichia coli K-12.</title>
        <authorList>
            <person name="Blattner F.R."/>
            <person name="Plunkett G. III"/>
            <person name="Bloch C.A."/>
            <person name="Perna N.T."/>
            <person name="Burland V."/>
            <person name="Riley M."/>
            <person name="Collado-Vides J."/>
            <person name="Glasner J.D."/>
            <person name="Rode C.K."/>
            <person name="Mayhew G.F."/>
            <person name="Gregor J."/>
            <person name="Davis N.W."/>
            <person name="Kirkpatrick H.A."/>
            <person name="Goeden M.A."/>
            <person name="Rose D.J."/>
            <person name="Mau B."/>
            <person name="Shao Y."/>
        </authorList>
    </citation>
    <scope>NUCLEOTIDE SEQUENCE [LARGE SCALE GENOMIC DNA]</scope>
    <source>
        <strain>K12 / MG1655 / ATCC 47076</strain>
    </source>
</reference>
<reference key="5">
    <citation type="journal article" date="2006" name="Mol. Syst. Biol.">
        <title>Highly accurate genome sequences of Escherichia coli K-12 strains MG1655 and W3110.</title>
        <authorList>
            <person name="Hayashi K."/>
            <person name="Morooka N."/>
            <person name="Yamamoto Y."/>
            <person name="Fujita K."/>
            <person name="Isono K."/>
            <person name="Choi S."/>
            <person name="Ohtsubo E."/>
            <person name="Baba T."/>
            <person name="Wanner B.L."/>
            <person name="Mori H."/>
            <person name="Horiuchi T."/>
        </authorList>
    </citation>
    <scope>NUCLEOTIDE SEQUENCE [LARGE SCALE GENOMIC DNA]</scope>
    <source>
        <strain>K12 / W3110 / ATCC 27325 / DSM 5911</strain>
    </source>
</reference>
<reference key="6">
    <citation type="journal article" date="1991" name="J. Biol. Chem.">
        <title>Expression of a sodium proton antiporter (NhaA) in Escherichia coli is induced by Na+ and Li+ ions.</title>
        <authorList>
            <person name="Karpel R."/>
            <person name="Alon T."/>
            <person name="Glaser G."/>
            <person name="Schuldiner S."/>
            <person name="Padan E."/>
        </authorList>
    </citation>
    <scope>NUCLEOTIDE SEQUENCE [GENOMIC DNA] OF 1-28</scope>
    <scope>INDUCTION</scope>
    <source>
        <strain>K12</strain>
    </source>
</reference>
<reference key="7">
    <citation type="journal article" date="1991" name="J. Biol. Chem.">
        <title>Overproduction and purification of a functional Na+/H+ antiporter coded by nhaA (ant) from Escherichia coli.</title>
        <authorList>
            <person name="Taglicht D."/>
            <person name="Padan E."/>
            <person name="Schuldiner S."/>
        </authorList>
    </citation>
    <scope>PROTEIN SEQUENCE OF 1-10</scope>
    <scope>FUNCTION</scope>
    <scope>ACTIVITY REGULATION</scope>
    <scope>SUBCELLULAR LOCATION</scope>
    <source>
        <strain>K12</strain>
    </source>
</reference>
<reference key="8">
    <citation type="journal article" date="1993" name="J. Biol. Chem.">
        <title>Proton-sodium stoichiometry of NhaA, an electrogenic antiporter from Escherichia coli.</title>
        <authorList>
            <person name="Taglicht D."/>
            <person name="Padan E."/>
            <person name="Schuldiner S."/>
        </authorList>
    </citation>
    <scope>FUNCTION</scope>
    <scope>CATALYTIC ACTIVITY</scope>
</reference>
<reference key="9">
    <citation type="journal article" date="1993" name="Proc. Natl. Acad. Sci. U.S.A.">
        <title>Histidine-226 is part of the pH sensor of NhaA, a Na+/H+ antiporter in Escherichia coli.</title>
        <authorList>
            <person name="Gerchman Y."/>
            <person name="Olami Y."/>
            <person name="Rimon A."/>
            <person name="Taglicht D."/>
            <person name="Schuldiner S."/>
            <person name="Padan E."/>
        </authorList>
    </citation>
    <scope>MUTAGENESIS OF HISTIDINE RESIDUES</scope>
</reference>
<reference key="10">
    <citation type="journal article" date="1994" name="Biol. Pharm. Bull.">
        <title>Lithium toxicity and Na+(Li+)/H+ antiporter in Escherichia coli.</title>
        <authorList>
            <person name="Inaba K."/>
            <person name="Kuroda T."/>
            <person name="Shimamoto T."/>
            <person name="Kayahara T."/>
            <person name="Tsuda M."/>
            <person name="Tsuchiya T."/>
        </authorList>
    </citation>
    <scope>FUNCTION IN SODIUM AND LITHIUM TRANSPORT</scope>
    <scope>BIOPHYSICOCHEMICAL PROPERTIES</scope>
    <scope>DISRUPTION PHENOTYPE</scope>
    <source>
        <strain>K12</strain>
    </source>
</reference>
<reference key="11">
    <citation type="journal article" date="1995" name="FEBS Lett.">
        <title>Essential aspartic acid residues, Asp-133, Asp-163 and Asp-164, in the transmembrane helices of a Na+/H+ antiporter (NhaA) from Escherichia coli.</title>
        <authorList>
            <person name="Inoue H."/>
            <person name="Noumi T."/>
            <person name="Tsuchiya T."/>
            <person name="Kanazawa H."/>
        </authorList>
    </citation>
    <scope>FUNCTION</scope>
    <scope>MUTAGENESIS OF ASP-65; ASP-133; ASP-163; ASP-164 AND ASP-282</scope>
</reference>
<reference key="12">
    <citation type="journal article" date="1995" name="J. Biol. Chem.">
        <title>Replacements of histidine 226 of NhaA-Na+/H+ antiporter of Escherichia coli. Cysteine (H226C) or serine (H226S) retain both normal activity and pH sensitivity, aspartate (H226D) shifts the pH profile toward basic pH, and alanine (H226A) inactivates the carrier at all pH values.</title>
        <authorList>
            <person name="Rimon A."/>
            <person name="Gerchman Y."/>
            <person name="Olami Y."/>
            <person name="Schuldiner S."/>
            <person name="Padan E."/>
        </authorList>
    </citation>
    <scope>MUTAGENESIS OF HIS-225</scope>
</reference>
<reference key="13">
    <citation type="journal article" date="1999" name="J. Biol. Chem.">
        <title>A pH-dependent conformational change of NhaA Na(+)/H(+) antiporter of Escherichia coli involves loop VIII-IX, plays a role in the pH response of the protein, and is maintained by the pure protein in dodecyl maltoside.</title>
        <authorList>
            <person name="Gerchman Y."/>
            <person name="Rimon A."/>
            <person name="Padan E."/>
        </authorList>
    </citation>
    <scope>ACTIVITY REGULATION</scope>
    <scope>MUTAGENESIS OF GLU-241; 242-LYS--HIS-253; LYS-249 AND VAL-254</scope>
</reference>
<reference key="14">
    <citation type="journal article" date="2001" name="Biochemistry">
        <title>Oligomerization of NhaA, the Na+/H+ antiporter of Escherichia coli in the membrane and its functional and structural consequences.</title>
        <authorList>
            <person name="Gerchman Y."/>
            <person name="Rimon A."/>
            <person name="Venturi M."/>
            <person name="Padan E."/>
        </authorList>
    </citation>
    <scope>SUBUNIT</scope>
    <scope>MUTAGENESIS OF ASP-163; ASP-164; HIS-225 AND GLY-338</scope>
</reference>
<reference key="15">
    <citation type="journal article" date="2004" name="J. Biol. Chem.">
        <title>Mutation E252C increases drastically the Km value for Na+ and causes an alkaline shift of the pH dependence of NhaA Na+/H+ antiporter of Escherichia coli.</title>
        <authorList>
            <person name="Tzubery T."/>
            <person name="Rimon A."/>
            <person name="Padan E."/>
        </authorList>
    </citation>
    <scope>ACTIVITY REGULATION</scope>
    <scope>MUTAGENESIS OF GLU-252</scope>
</reference>
<reference key="16">
    <citation type="journal article" date="2005" name="Science">
        <title>Global topology analysis of the Escherichia coli inner membrane proteome.</title>
        <authorList>
            <person name="Daley D.O."/>
            <person name="Rapp M."/>
            <person name="Granseth E."/>
            <person name="Melen K."/>
            <person name="Drew D."/>
            <person name="von Heijne G."/>
        </authorList>
    </citation>
    <scope>SUBCELLULAR LOCATION</scope>
    <scope>TOPOLOGY [LARGE SCALE ANALYSIS]</scope>
    <source>
        <strain>K12 / MG1655 / ATCC 47076</strain>
    </source>
</reference>
<reference key="17">
    <citation type="journal article" date="2007" name="J. Biol. Chem.">
        <title>Monomers of the NhaA Na+/H+ antiporter of Escherichia coli are fully functional yet dimers are beneficial under extreme stress conditions at alkaline pH in the presence of Na+ or Li+.</title>
        <authorList>
            <person name="Rimon A."/>
            <person name="Tzubery T."/>
            <person name="Padan E."/>
        </authorList>
    </citation>
    <scope>SUBUNIT</scope>
    <scope>MUTAGENESIS OF 45-PRO--ASN-58</scope>
</reference>
<reference key="18">
    <citation type="journal article" date="2009" name="Proteins">
        <title>Combined computational and biochemical study reveals the importance of electrostatic interactions between the 'pH sensor' and the cation binding site of the sodium/proton antiporter NhaA of Escherichia coli.</title>
        <authorList>
            <person name="Olkhova E."/>
            <person name="Kozachkov L."/>
            <person name="Padan E."/>
            <person name="Michel H."/>
        </authorList>
    </citation>
    <scope>MUTAGENESIS OF ASP-163 AND ASP-164</scope>
</reference>
<reference key="19">
    <citation type="journal article" date="2012" name="J. Biol. Chem.">
        <title>Revealing the ligand binding site of NhaA Na+/H+ antiporter and its pH dependence.</title>
        <authorList>
            <person name="Maes M."/>
            <person name="Rimon A."/>
            <person name="Kozachkov-Magrisso L."/>
            <person name="Friedler A."/>
            <person name="Padan E."/>
        </authorList>
    </citation>
    <scope>FUNCTION</scope>
    <scope>BIOPHYSICOCHEMICAL PROPERTIES</scope>
    <scope>MUTAGENESIS OF THR-132; ASP-133; ASP-163; ASP-164 AND LYS-300</scope>
</reference>
<reference key="20">
    <citation type="journal article" date="2013" name="J. Biol. Chem.">
        <title>Differential effects of mutations on the transport properties of the Na+/H+ antiporter NhaA from Escherichia coli.</title>
        <authorList>
            <person name="Mager T."/>
            <person name="Braner M."/>
            <person name="Kubsch B."/>
            <person name="Hatahet L."/>
            <person name="Alkoby D."/>
            <person name="Rimon A."/>
            <person name="Padan E."/>
            <person name="Fendler K."/>
        </authorList>
    </citation>
    <scope>FUNCTION</scope>
    <scope>CATALYTIC ACTIVITY</scope>
    <scope>ACTIVITY REGULATION</scope>
    <scope>SUBUNIT</scope>
    <scope>MUTAGENESIS OF 45-PRO--ASN-58; ALA-167; HIS-225 AND VAL-254</scope>
</reference>
<reference key="21">
    <citation type="journal article" date="2013" name="Mol. Membr. Biol.">
        <title>Conformational changes in NhaA Na+/H+ antiporter.</title>
        <authorList>
            <person name="Kozachkov L."/>
            <person name="Padan E."/>
        </authorList>
    </citation>
    <scope>DOMAIN</scope>
</reference>
<reference key="22">
    <citation type="journal article" date="2016" name="Sci. Rep.">
        <title>The Ec-NhaA antiporter switches from antagonistic to synergistic antiport upon a single point mutation.</title>
        <authorList>
            <person name="Dwivedi M."/>
            <person name="Sukenik S."/>
            <person name="Friedler A."/>
            <person name="Padan E."/>
        </authorList>
    </citation>
    <scope>FUNCTION</scope>
    <scope>CATALYTIC ACTIVITY</scope>
    <scope>MUTAGENESIS OF ASP-133 AND ALA-167</scope>
</reference>
<reference key="23">
    <citation type="journal article" date="2016" name="Nat. Commun.">
        <title>Mechanism of pH-dependent activation of the sodium-proton antiporter NhaA.</title>
        <authorList>
            <person name="Huang Y."/>
            <person name="Chen W."/>
            <person name="Dotson D.L."/>
            <person name="Beckstein O."/>
            <person name="Shen J."/>
        </authorList>
    </citation>
    <scope>DOMAIN</scope>
    <scope>PROPOSED MECHANISM</scope>
</reference>
<reference key="24">
    <citation type="journal article" date="2017" name="J. Biol. Chem.">
        <title>Lysine 300 is essential for stability but not for electrogenic transport of the Escherichia coli NhaA Na+/H+ antiporter.</title>
        <authorList>
            <person name="Calinescu O."/>
            <person name="Dwivedi M."/>
            <person name="Patino-Ruiz M."/>
            <person name="Padan E."/>
            <person name="Fendler K."/>
        </authorList>
    </citation>
    <scope>DOMAIN</scope>
    <scope>MUTAGENESIS OF LYS-300</scope>
</reference>
<reference key="25">
    <citation type="journal article" date="2018" name="J. Mol. Biol.">
        <title>Asp133 residue in NhaA Na+/H+ antiporter is required for stability cation binding and transport.</title>
        <authorList>
            <person name="Rimon A."/>
            <person name="Dwivedi M."/>
            <person name="Friedler A."/>
            <person name="Padan E."/>
        </authorList>
    </citation>
    <scope>MUTAGENESIS OF ASP-133</scope>
</reference>
<reference key="26">
    <citation type="journal article" date="2019" name="J. Biol. Chem.">
        <title>Replacement of Lys-300 with a glutamine in the NhaA Na+/H+ antiporter of Escherichia coli yields a functional electrogenic transporter.</title>
        <authorList>
            <person name="Patino-Ruiz M."/>
            <person name="Dwivedi M."/>
            <person name="Calinescu O."/>
            <person name="Karabel M."/>
            <person name="Padan E."/>
            <person name="Fendler K."/>
        </authorList>
    </citation>
    <scope>MUTAGENESIS OF ASP-163 AND LYS-300</scope>
    <scope>ALTERNATIVE TRANSPORT MECHANISMS</scope>
</reference>
<reference key="27">
    <citation type="journal article" date="2021" name="Biochimie">
        <title>Site-directed mutations reflecting functional and structural properties of Ec-NhaA.</title>
        <authorList>
            <person name="Dwivedi M."/>
        </authorList>
    </citation>
    <scope>REVIEW</scope>
    <scope>COMPARATIVE ANALYSIS OF VARIOUS MUTATIONS</scope>
</reference>
<reference evidence="47" key="28">
    <citation type="journal article" date="2005" name="Nature">
        <title>Structure of a Na+/H+ antiporter and insights into mechanism of action and regulation by pH.</title>
        <authorList>
            <person name="Hunte C."/>
            <person name="Screpanti E."/>
            <person name="Venturi M."/>
            <person name="Rimon A."/>
            <person name="Padan E."/>
            <person name="Michel H."/>
        </authorList>
    </citation>
    <scope>X-RAY CRYSTALLOGRAPHY (3.45 ANGSTROMS)</scope>
    <scope>SUBUNIT</scope>
    <scope>SUBCELLULAR LOCATION</scope>
    <scope>TOPOLOGY</scope>
    <scope>DOMAIN</scope>
</reference>
<reference evidence="48" key="29">
    <citation type="journal article" date="2009" name="J. Mol. Biol.">
        <title>Conformations of NhaA, the Na+/H+ exchanger from Escherichia coli, in the pH-activated and ion-translocating states.</title>
        <authorList>
            <person name="Appel M."/>
            <person name="Hizlan D."/>
            <person name="Vinothkumar K.R."/>
            <person name="Ziegler C."/>
            <person name="Kuehlbrandt W."/>
        </authorList>
    </citation>
    <scope>STRUCTURE BY ELECTRON MICROSCOPY (7.00 ANGSTROMS) OF 9-384</scope>
    <scope>SUBUNIT</scope>
    <scope>SUBCELLULAR LOCATION</scope>
    <scope>TOPOLOGY</scope>
    <scope>DOMAIN</scope>
</reference>
<reference evidence="49 50" key="30">
    <citation type="journal article" date="2014" name="J. Gen. Physiol.">
        <title>Crystal structure of the sodium-proton antiporter NhaA dimer and new mechanistic insights.</title>
        <authorList>
            <person name="Lee C."/>
            <person name="Yashiro S."/>
            <person name="Dotson D.L."/>
            <person name="Uzdavinys P."/>
            <person name="Iwata S."/>
            <person name="Sansom M.S."/>
            <person name="von Ballmoos C."/>
            <person name="Beckstein O."/>
            <person name="Drew D."/>
            <person name="Cameron A.D."/>
        </authorList>
    </citation>
    <scope>X-RAY CRYSTALLOGRAPHY (3.50 ANGSTROMS) OF WILD-TYPE AND MUTANT THR-109/GLY-277/MET-296</scope>
    <scope>SUBUNIT</scope>
    <scope>SUBCELLULAR LOCATION</scope>
    <scope>TOPOLOGY</scope>
    <scope>DOMAIN</scope>
    <scope>PROPOSED MECHANISM</scope>
</reference>
<organism>
    <name type="scientific">Escherichia coli (strain K12)</name>
    <dbReference type="NCBI Taxonomy" id="83333"/>
    <lineage>
        <taxon>Bacteria</taxon>
        <taxon>Pseudomonadati</taxon>
        <taxon>Pseudomonadota</taxon>
        <taxon>Gammaproteobacteria</taxon>
        <taxon>Enterobacterales</taxon>
        <taxon>Enterobacteriaceae</taxon>
        <taxon>Escherichia</taxon>
    </lineage>
</organism>
<dbReference type="EMBL" id="J03879">
    <property type="protein sequence ID" value="AAA23448.2"/>
    <property type="molecule type" value="Genomic_DNA"/>
</dbReference>
<dbReference type="EMBL" id="U00096">
    <property type="protein sequence ID" value="AAC73130.1"/>
    <property type="molecule type" value="Genomic_DNA"/>
</dbReference>
<dbReference type="EMBL" id="AP009048">
    <property type="protein sequence ID" value="BAB96592.1"/>
    <property type="molecule type" value="Genomic_DNA"/>
</dbReference>
<dbReference type="EMBL" id="S67239">
    <property type="protein sequence ID" value="AAB20348.1"/>
    <property type="molecule type" value="Genomic_DNA"/>
</dbReference>
<dbReference type="PIR" id="C64722">
    <property type="entry name" value="C64722"/>
</dbReference>
<dbReference type="RefSeq" id="NP_414560.1">
    <property type="nucleotide sequence ID" value="NC_000913.3"/>
</dbReference>
<dbReference type="RefSeq" id="WP_000681354.1">
    <property type="nucleotide sequence ID" value="NZ_LN832404.1"/>
</dbReference>
<dbReference type="PDB" id="1ZCD">
    <property type="method" value="X-ray"/>
    <property type="resolution" value="3.45 A"/>
    <property type="chains" value="A/B=1-388"/>
</dbReference>
<dbReference type="PDB" id="3FI1">
    <property type="method" value="EM"/>
    <property type="resolution" value="7.00 A"/>
    <property type="chains" value="A=9-384"/>
</dbReference>
<dbReference type="PDB" id="4ATV">
    <property type="method" value="X-ray"/>
    <property type="resolution" value="3.50 A"/>
    <property type="chains" value="A/B/C/D=1-388"/>
</dbReference>
<dbReference type="PDB" id="4AU5">
    <property type="method" value="X-ray"/>
    <property type="resolution" value="3.70 A"/>
    <property type="chains" value="A/B/C/D=1-388"/>
</dbReference>
<dbReference type="PDB" id="7S24">
    <property type="method" value="X-ray"/>
    <property type="resolution" value="2.20 A"/>
    <property type="chains" value="A=1-388"/>
</dbReference>
<dbReference type="PDB" id="8PS0">
    <property type="method" value="EM"/>
    <property type="resolution" value="3.37 A"/>
    <property type="chains" value="A/B=1-388"/>
</dbReference>
<dbReference type="PDBsum" id="1ZCD"/>
<dbReference type="PDBsum" id="3FI1"/>
<dbReference type="PDBsum" id="4ATV"/>
<dbReference type="PDBsum" id="4AU5"/>
<dbReference type="PDBsum" id="7S24"/>
<dbReference type="PDBsum" id="8PS0"/>
<dbReference type="SMR" id="P13738"/>
<dbReference type="BioGRID" id="4259720">
    <property type="interactions" value="41"/>
</dbReference>
<dbReference type="BioGRID" id="849160">
    <property type="interactions" value="2"/>
</dbReference>
<dbReference type="DIP" id="DIP-10335N"/>
<dbReference type="FunCoup" id="P13738">
    <property type="interactions" value="177"/>
</dbReference>
<dbReference type="STRING" id="511145.b0019"/>
<dbReference type="BindingDB" id="P13738"/>
<dbReference type="ChEMBL" id="CHEMBL5478"/>
<dbReference type="TCDB" id="2.A.33.1.1">
    <property type="family name" value="the nhaa na(+):h(+) antiporter (nhaa) family"/>
</dbReference>
<dbReference type="jPOST" id="P13738"/>
<dbReference type="PaxDb" id="511145-b0019"/>
<dbReference type="EnsemblBacteria" id="AAC73130">
    <property type="protein sequence ID" value="AAC73130"/>
    <property type="gene ID" value="b0019"/>
</dbReference>
<dbReference type="GeneID" id="944758"/>
<dbReference type="KEGG" id="ecj:JW0018"/>
<dbReference type="KEGG" id="eco:b0019"/>
<dbReference type="KEGG" id="ecoc:C3026_00090"/>
<dbReference type="PATRIC" id="fig|1411691.4.peg.2265"/>
<dbReference type="EchoBASE" id="EB0646"/>
<dbReference type="eggNOG" id="COG3004">
    <property type="taxonomic scope" value="Bacteria"/>
</dbReference>
<dbReference type="HOGENOM" id="CLU_015803_1_0_6"/>
<dbReference type="InParanoid" id="P13738"/>
<dbReference type="OMA" id="HGFGIPM"/>
<dbReference type="OrthoDB" id="9808135at2"/>
<dbReference type="PhylomeDB" id="P13738"/>
<dbReference type="BioCyc" id="EcoCyc:NHAA-MONOMER"/>
<dbReference type="BioCyc" id="MetaCyc:NHAA-MONOMER"/>
<dbReference type="SABIO-RK" id="P13738"/>
<dbReference type="EvolutionaryTrace" id="P13738"/>
<dbReference type="PHI-base" id="PHI:3266"/>
<dbReference type="PRO" id="PR:P13738"/>
<dbReference type="Proteomes" id="UP000000625">
    <property type="component" value="Chromosome"/>
</dbReference>
<dbReference type="GO" id="GO:0005886">
    <property type="term" value="C:plasma membrane"/>
    <property type="evidence" value="ECO:0000314"/>
    <property type="project" value="EcoCyc"/>
</dbReference>
<dbReference type="GO" id="GO:1901612">
    <property type="term" value="F:cardiolipin binding"/>
    <property type="evidence" value="ECO:0000314"/>
    <property type="project" value="EcoCyc"/>
</dbReference>
<dbReference type="GO" id="GO:0015385">
    <property type="term" value="F:sodium:proton antiporter activity"/>
    <property type="evidence" value="ECO:0000314"/>
    <property type="project" value="EcoCyc"/>
</dbReference>
<dbReference type="GO" id="GO:0051453">
    <property type="term" value="P:regulation of intracellular pH"/>
    <property type="evidence" value="ECO:0000304"/>
    <property type="project" value="EcoCyc"/>
</dbReference>
<dbReference type="GO" id="GO:0010446">
    <property type="term" value="P:response to alkaline pH"/>
    <property type="evidence" value="ECO:0000314"/>
    <property type="project" value="EcoCyc"/>
</dbReference>
<dbReference type="GO" id="GO:0009651">
    <property type="term" value="P:response to salt stress"/>
    <property type="evidence" value="ECO:0000315"/>
    <property type="project" value="EcoCyc"/>
</dbReference>
<dbReference type="FunFam" id="1.20.1530.10:FF:000001">
    <property type="entry name" value="Na(+)/H(+) antiporter NhaA"/>
    <property type="match status" value="1"/>
</dbReference>
<dbReference type="Gene3D" id="1.20.1530.10">
    <property type="entry name" value="Na+/H+ antiporter like domain"/>
    <property type="match status" value="1"/>
</dbReference>
<dbReference type="HAMAP" id="MF_01844">
    <property type="entry name" value="NhaA"/>
    <property type="match status" value="1"/>
</dbReference>
<dbReference type="InterPro" id="IPR023171">
    <property type="entry name" value="Na/H_antiporter_dom_sf"/>
</dbReference>
<dbReference type="InterPro" id="IPR004670">
    <property type="entry name" value="NhaA"/>
</dbReference>
<dbReference type="NCBIfam" id="TIGR00773">
    <property type="entry name" value="NhaA"/>
    <property type="match status" value="1"/>
</dbReference>
<dbReference type="NCBIfam" id="NF007111">
    <property type="entry name" value="PRK09560.1"/>
    <property type="match status" value="1"/>
</dbReference>
<dbReference type="NCBIfam" id="NF007112">
    <property type="entry name" value="PRK09561.1"/>
    <property type="match status" value="1"/>
</dbReference>
<dbReference type="PANTHER" id="PTHR30341:SF0">
    <property type="entry name" value="NA(+)_H(+) ANTIPORTER NHAA"/>
    <property type="match status" value="1"/>
</dbReference>
<dbReference type="PANTHER" id="PTHR30341">
    <property type="entry name" value="SODIUM ION/PROTON ANTIPORTER NHAA-RELATED"/>
    <property type="match status" value="1"/>
</dbReference>
<dbReference type="Pfam" id="PF06965">
    <property type="entry name" value="Na_H_antiport_1"/>
    <property type="match status" value="1"/>
</dbReference>
<proteinExistence type="evidence at protein level"/>
<accession>P13738</accession>
<gene>
    <name evidence="26" type="primary">nhaA</name>
    <name evidence="28" type="synonym">ant</name>
    <name type="ordered locus">b0019</name>
    <name type="ordered locus">JW0018</name>
</gene>
<name>NHAA_ECOLI</name>
<keyword id="KW-0002">3D-structure</keyword>
<keyword id="KW-0050">Antiport</keyword>
<keyword id="KW-0997">Cell inner membrane</keyword>
<keyword id="KW-1003">Cell membrane</keyword>
<keyword id="KW-0903">Direct protein sequencing</keyword>
<keyword id="KW-0406">Ion transport</keyword>
<keyword id="KW-0472">Membrane</keyword>
<keyword id="KW-1185">Reference proteome</keyword>
<keyword id="KW-0915">Sodium</keyword>
<keyword id="KW-0739">Sodium transport</keyword>
<keyword id="KW-0812">Transmembrane</keyword>
<keyword id="KW-1133">Transmembrane helix</keyword>
<keyword id="KW-0813">Transport</keyword>
<comment type="function">
    <text evidence="7 13 14 16 19 23 24 25 29">Na(+)/H(+) antiporter that extrudes sodium in exchange for external protons (PubMed:1645730, PubMed:23836890, PubMed:2839489, PubMed:7737413, PubMed:8019504, PubMed:8383669). Plays an important role in the regulation of intracellular pH, cellular Na(+) content and cell volume (PubMed:33129932). Catalyzes the exchange of 2 H(+) per Na(+) (PubMed:23836890, PubMed:8383669). This stoichiometry applies at both neutral and alkaline pH values (PubMed:8383669). In addition, can also transport lithium and is involved in lithium detoxification (PubMed:22915592, PubMed:27021484, PubMed:7737413, PubMed:8019504). Binding of the Li(+) and H(+) ligands to NhaA is coupled and antagonistic (PubMed:27021484).</text>
</comment>
<comment type="catalytic activity">
    <reaction evidence="14 25">
        <text>Na(+)(in) + 2 H(+)(out) = Na(+)(out) + 2 H(+)(in)</text>
        <dbReference type="Rhea" id="RHEA:29251"/>
        <dbReference type="ChEBI" id="CHEBI:15378"/>
        <dbReference type="ChEBI" id="CHEBI:29101"/>
    </reaction>
    <physiologicalReaction direction="left-to-right" evidence="14 25">
        <dbReference type="Rhea" id="RHEA:29252"/>
    </physiologicalReaction>
</comment>
<comment type="catalytic activity">
    <reaction evidence="16 46">
        <text>Li(+)(in) + 2 H(+)(out) = Li(+)(out) + 2 H(+)(in)</text>
        <dbReference type="Rhea" id="RHEA:70431"/>
        <dbReference type="ChEBI" id="CHEBI:15378"/>
        <dbReference type="ChEBI" id="CHEBI:49713"/>
    </reaction>
    <physiologicalReaction direction="left-to-right" evidence="16 46">
        <dbReference type="Rhea" id="RHEA:70432"/>
    </physiologicalReaction>
</comment>
<comment type="activity regulation">
    <text evidence="2 4 7 14">Activity is regulated by pH (PubMed:10455127, PubMed:14604993, PubMed:1645730, PubMed:23836890). Active at alkaline pH (PubMed:10455127, PubMed:14604993, PubMed:1645730, PubMed:23836890). Activity is strongly down-regulated below pH 6.5 and a dramatic increase in activity is observed upon increase of the pH from 6.5 to 8.5 (PubMed:1645730).</text>
</comment>
<comment type="biophysicochemical properties">
    <kinetics>
        <KM evidence="24">1.98 mM for Na(+)</KM>
        <KM evidence="13">0.2 mM for Na(+)</KM>
        <KM evidence="24">0.91 mM for Li(+)</KM>
        <KM evidence="13">0.02 mM for Li(+)</KM>
    </kinetics>
</comment>
<comment type="subunit">
    <text evidence="3 6 9 11 14 15">Monomer (PubMed:17635927). Homodimer (PubMed:11258962, PubMed:15988517, PubMed:17635927, PubMed:19396973, PubMed:25422503). Under routine stress conditions, the monomeric form is fully functional (PubMed:17635927, PubMed:23836890). However, the dimeric form is much more efficient in conferring growth resistance under extreme stress conditions (PubMed:17635927).</text>
</comment>
<comment type="subcellular location">
    <subcellularLocation>
        <location evidence="5 6 7 11 15">Cell inner membrane</location>
        <topology evidence="6 11 15">Multi-pass membrane protein</topology>
    </subcellularLocation>
</comment>
<comment type="induction">
    <text evidence="8">Expression is induced by Na(+) and Li(+). The Na(+)-dependent enhancement of expression is augmented by alkalinization.</text>
</comment>
<comment type="domain">
    <text evidence="6 29">Displays a non-canonical transmembrane assembly, which is termed the NhaA fold. A unique assembly of two pairs of short helices connected by crossed, extended chains creates a balanced electrostatic environment for the binding of the substrate ions (PubMed:15988517). Is organized into two functional regions: the pH sensor region, a cluster of amino-acyl side chains involved in pH regulation, and a catalytic region containing the ion-binding site located approximately 9 Angstroms apart from the pH sensor region (PubMed:33129932).</text>
</comment>
<comment type="domain">
    <text evidence="11 12 15 17 18">Shows two different conformational changes in response to pH and substrate ions (PubMed:19396973, PubMed:22694117). The first change is induced by a rise in pH from 6 to 7 and marks the transition to the pH-activated state (PubMed:19396973). The second conformational change is induced by the substrate ions Na(+) and Li(+) at pH above 7 (PubMed:19396973). This movement would cause a charge imbalance at the ion-binding site that may trigger the release of the substrate ion and open a periplasmic exit channel (PubMed:19396973). The transport mechanism may involve Asp-163 switching between forming a salt bridge with Lys-300 and interacting with the proton and/or sodium ion (PubMed:25422503, PubMed:27708266, PubMed:28330875). The salt bridge may stabilize the conformation (PubMed:28330875).</text>
</comment>
<comment type="disruption phenotype">
    <text evidence="24">Mutant lacking this gene can grow in the presence of 0.1 M LiCl, but not in the presence of 0.6 M LiCl.</text>
</comment>
<comment type="similarity">
    <text evidence="1 31">Belongs to the NhaA Na(+)/H(+) (TC 2.A.33) antiporter family.</text>
</comment>
<feature type="chain" id="PRO_0000052410" description="Na(+)/H(+) antiporter NhaA">
    <location>
        <begin position="1"/>
        <end position="388"/>
    </location>
</feature>
<feature type="topological domain" description="Cytoplasmic" evidence="15 49 50">
    <location>
        <begin position="1"/>
        <end position="11"/>
    </location>
</feature>
<feature type="transmembrane region" description="Helical; Name=1" evidence="15 49 50">
    <location>
        <begin position="12"/>
        <end position="31"/>
    </location>
</feature>
<feature type="topological domain" description="Periplasmic" evidence="15 49 50">
    <location>
        <begin position="32"/>
        <end position="58"/>
    </location>
</feature>
<feature type="transmembrane region" description="Helical; Name=2" evidence="15 49 50">
    <location>
        <begin position="59"/>
        <end position="80"/>
    </location>
</feature>
<feature type="topological domain" description="Cytoplasmic" evidence="15 49 50">
    <location>
        <begin position="81"/>
        <end position="96"/>
    </location>
</feature>
<feature type="transmembrane region" description="Helical; Name=3" evidence="15 49 50">
    <location>
        <begin position="97"/>
        <end position="116"/>
    </location>
</feature>
<feature type="topological domain" description="Periplasmic" evidence="15 49 50">
    <location>
        <begin position="117"/>
        <end position="122"/>
    </location>
</feature>
<feature type="transmembrane region" description="Helical; Name=4" evidence="15 49 50">
    <location>
        <begin position="123"/>
        <end position="130"/>
    </location>
</feature>
<feature type="topological domain" description="Cytoplasmic" evidence="15 49 50">
    <location>
        <begin position="131"/>
        <end position="154"/>
    </location>
</feature>
<feature type="transmembrane region" description="Helical; Name=5" evidence="15 49 50">
    <location>
        <begin position="155"/>
        <end position="176"/>
    </location>
</feature>
<feature type="topological domain" description="Periplasmic" evidence="15 49 50">
    <location>
        <begin position="177"/>
        <end position="180"/>
    </location>
</feature>
<feature type="transmembrane region" description="Helical; Name=6" evidence="15 49 50">
    <location>
        <begin position="181"/>
        <end position="200"/>
    </location>
</feature>
<feature type="topological domain" description="Cytoplasmic" evidence="15 49 50">
    <location>
        <begin position="201"/>
        <end position="204"/>
    </location>
</feature>
<feature type="transmembrane region" description="Helical; Name=7" evidence="15 49 50">
    <location>
        <begin position="205"/>
        <end position="222"/>
    </location>
</feature>
<feature type="topological domain" description="Periplasmic" evidence="15 49 50">
    <location>
        <position position="223"/>
    </location>
</feature>
<feature type="transmembrane region" description="Helical; Name=8" evidence="15 49 50">
    <location>
        <begin position="224"/>
        <end position="236"/>
    </location>
</feature>
<feature type="topological domain" description="Cytoplasmic" evidence="15 49 50">
    <location>
        <begin position="237"/>
        <end position="253"/>
    </location>
</feature>
<feature type="transmembrane region" description="Helical; Name=9" evidence="15 49 50">
    <location>
        <begin position="254"/>
        <end position="272"/>
    </location>
</feature>
<feature type="topological domain" description="Periplasmic" evidence="15 49 50">
    <location>
        <begin position="273"/>
        <end position="286"/>
    </location>
</feature>
<feature type="transmembrane region" description="Helical; Name=10" evidence="15 49 50">
    <location>
        <begin position="287"/>
        <end position="310"/>
    </location>
</feature>
<feature type="topological domain" description="Cytoplasmic" evidence="15 49 50">
    <location>
        <begin position="311"/>
        <end position="339"/>
    </location>
</feature>
<feature type="transmembrane region" description="Helical; Name=11" evidence="15 49 50">
    <location>
        <begin position="340"/>
        <end position="350"/>
    </location>
</feature>
<feature type="topological domain" description="Periplasmic" evidence="15 49 50">
    <location>
        <begin position="351"/>
        <end position="357"/>
    </location>
</feature>
<feature type="transmembrane region" description="Helical; Name=12" evidence="15 49 50">
    <location>
        <begin position="358"/>
        <end position="380"/>
    </location>
</feature>
<feature type="topological domain" description="Cytoplasmic" evidence="5 15 49 50">
    <location>
        <begin position="381"/>
        <end position="388"/>
    </location>
</feature>
<feature type="region of interest" description="Important for dimerization" evidence="35 38">
    <location>
        <begin position="45"/>
        <end position="58"/>
    </location>
</feature>
<feature type="site" description="Important for stability, cation binding and translocation" evidence="34 37 40 43 45">
    <location>
        <position position="133"/>
    </location>
</feature>
<feature type="site" description="Essential for cation binding and translocation" evidence="34 36 37 39 40 41 44 45">
    <location>
        <position position="163"/>
    </location>
</feature>
<feature type="site" description="Essential for cation binding and translocation" evidence="34 36 37 39 40 41 45">
    <location>
        <position position="164"/>
    </location>
</feature>
<feature type="site" description="Important for pH response" evidence="32">
    <location>
        <position position="241"/>
    </location>
</feature>
<feature type="site" description="Important for pH response" evidence="33">
    <location>
        <position position="252"/>
    </location>
</feature>
<feature type="site" description="Important for pH response" evidence="32">
    <location>
        <position position="254"/>
    </location>
</feature>
<feature type="site" description="Important for stability and activity" evidence="34 37 39 41 42 44">
    <location>
        <position position="300"/>
    </location>
</feature>
<feature type="mutagenesis site" description="Exists exclusively in a monomeric form. Shows antiporter activity under routine stress conditions, but is much less efficient than wild-type dimeric NhaA in conferring growth resistance under extreme stress conditions. Does not affect pH dependence." evidence="9 14">
    <location>
        <begin position="45"/>
        <end position="58"/>
    </location>
</feature>
<feature type="mutagenesis site" description="Does not impair antiporter activity. Mutant can still survive in high NaC1 or LiC1 medium." evidence="23">
    <original>D</original>
    <variation>N</variation>
    <location>
        <position position="65"/>
    </location>
</feature>
<feature type="mutagenesis site" description="Decreases both Na(+)/H(+) and Li(+)/H(+) antiporter activities. Increases Km for Na(+) and Li(+)." evidence="13">
    <original>T</original>
    <variation>C</variation>
    <location>
        <position position="132"/>
    </location>
</feature>
<feature type="mutagenesis site" description="Decreases both Na(+)/H(+) and Li(+)/H(+) antiporter activities. Increases Km for Na(+) and Li(+). Decreases thermal stability." evidence="20">
    <original>D</original>
    <variation>A</variation>
    <location>
        <position position="133"/>
    </location>
</feature>
<feature type="mutagenesis site" description="Decreases both Na(+)/H(+) and Li(+)/H(+) antiporter activities. Increases Km for Na(+) and Li(+). 5-fold decrease in Li(+) binding affinity. Changes the H(+)/Li(+) stoichiometry to 4." evidence="13 16 20">
    <original>D</original>
    <variation>C</variation>
    <location>
        <position position="133"/>
    </location>
</feature>
<feature type="mutagenesis site" description="Decreases both Na(+)/H(+) and Li(+)/H(+) antiporter activities. Increases Km for Na(+) and Li(+). Decreases thermal stability." evidence="20">
    <original>D</original>
    <variation>K</variation>
    <location>
        <position position="133"/>
    </location>
</feature>
<feature type="mutagenesis site" description="Loss of both Na(+)/H(+) and Li(+)/H(+) antiporter activities under all pH conditions examined. Abolishes ability to grow on high salt medium." evidence="23">
    <original>D</original>
    <variation>N</variation>
    <location>
        <position position="133"/>
    </location>
</feature>
<feature type="mutagenesis site" description="Loss of both Na(+)/H(+) and Li(+)/H(+) antiporter activities. Abolishes ability to grow on high salt medium. Cannot bind Li(+)." evidence="3 13">
    <original>D</original>
    <variation>C</variation>
    <location>
        <position position="163"/>
    </location>
</feature>
<feature type="mutagenesis site" description="Loss of both Na(+)/H(+) and Li(+)/H(+) antiporter activities. Abolishes ability to grow on high salt medium." evidence="10">
    <original>D</original>
    <variation>E</variation>
    <location>
        <position position="163"/>
    </location>
</feature>
<feature type="mutagenesis site" description="Loss of both Na(+)/H(+) and Li(+)/H(+) antiporter activities under all pH conditions examined. Abolishes ability to grow on high salt medium. Still active and electrogenic; when associated with Q-300." evidence="10 21 23">
    <original>D</original>
    <variation>N</variation>
    <location>
        <position position="163"/>
    </location>
</feature>
<feature type="mutagenesis site" description="Loss of both Na(+)/H(+) and Li(+)/H(+) antiporter activities. Abolishes ability to grow on high salt medium. Cannot bind Li(+)." evidence="3 13">
    <original>D</original>
    <variation>C</variation>
    <location>
        <position position="164"/>
    </location>
</feature>
<feature type="mutagenesis site" description="Is active with both Na(+) and Li(+), however with very high apparent Km values with both substrates. Can grow on high Na(+) at neutral pH, albeit at a slower growth rate than the wild type strain." evidence="10">
    <original>D</original>
    <variation>E</variation>
    <location>
        <position position="164"/>
    </location>
</feature>
<feature type="mutagenesis site" description="Loss of both Na(+)/H(+) and Li(+)/H(+) antiporter activities under all pH conditions examined. Abolishes ability to grow on high salt medium." evidence="10 23">
    <original>D</original>
    <variation>N</variation>
    <location>
        <position position="164"/>
    </location>
</feature>
<feature type="mutagenesis site" description="Shows reduced Na(+)/H(+) and Li(+)/H(+) antiporter activities, and a stronger down-regulation in the alkaline range for Na(+) import. Converts the antagonistic binding of the wild-type protein into synergistic Li(+)/H(+) binding." evidence="14 16">
    <original>A</original>
    <variation>P</variation>
    <location>
        <position position="167"/>
    </location>
</feature>
<feature type="mutagenesis site" description="Loss of antiporter activity. Abolishes ability to grow at alkaline pH." evidence="22">
    <original>H</original>
    <variation>A</variation>
    <location>
        <position position="225"/>
    </location>
</feature>
<feature type="mutagenesis site" description="Slightly reduced antiporter activity. No effect on pH sensitivity." evidence="22">
    <original>H</original>
    <variation>C</variation>
    <variation>S</variation>
    <location>
        <position position="225"/>
    </location>
</feature>
<feature type="mutagenesis site" description="Shifts threshold for pH-sensitive inactivation." evidence="22">
    <original>H</original>
    <variation>D</variation>
    <location>
        <position position="225"/>
    </location>
</feature>
<feature type="mutagenesis site" description="Shifts threshold for pH-sensitive inactivation. The pH dependence of Na(+) import is shifted by 1 pH unit to the acidic range compared with the wild type." evidence="3 14 22">
    <original>H</original>
    <variation>R</variation>
    <location>
        <position position="225"/>
    </location>
</feature>
<feature type="mutagenesis site" description="Affects pH sensitivity. Shows acidic shift in its pH profile. Causes a shift in the pH profile toward basic pH; when associated with C-254." evidence="2">
    <original>E</original>
    <variation>C</variation>
    <location>
        <position position="241"/>
    </location>
</feature>
<feature type="mutagenesis site" description="Lack of Na(+)/H(+) antiporter activity at pH 7, but shows weak activity at pH 8.5." evidence="2">
    <location>
        <begin position="242"/>
        <end position="253"/>
    </location>
</feature>
<feature type="mutagenesis site" description="Affects the pH sensitivity. The pH profile of the activity is shifted by about half a pH unit toward acidic pH." evidence="2">
    <original>K</original>
    <variation>KIEG</variation>
    <location>
        <position position="249"/>
    </location>
</feature>
<feature type="mutagenesis site" description="Increases drastically the Km for Na(+). The pH profile of the activity is shifted by one pH unit toward the alkaline range." evidence="4">
    <original>E</original>
    <variation>C</variation>
    <location>
        <position position="252"/>
    </location>
</feature>
<feature type="mutagenesis site" description="Affects the pH sensitivity. The pH profile of the activity is shifted by about half a pH unit toward acidic pH. Causes a shift in the pH profile toward basic pH; when associated with C-241. Another study shows no acidic shift of the pH profile but rather a moderate alkaline shift in the reverse transport direction." evidence="2 14">
    <original>V</original>
    <variation>C</variation>
    <location>
        <position position="254"/>
    </location>
</feature>
<feature type="mutagenesis site" description="Does not impair antiporter activity. Mutant can still survive in high NaC1 or LiC1 medium." evidence="23">
    <original>D</original>
    <variation>N</variation>
    <location>
        <position position="282"/>
    </location>
</feature>
<feature type="mutagenesis site" description="Loss of Na(+)/H(+) antiporter activity, but retains 30% of Li(+)/H(+) antiporter activity. Shows a wild type-like pH dependence and a similar apparent Na(+) affinity. Shows higher affinity for Li(+)." evidence="18">
    <original>K</original>
    <variation>A</variation>
    <location>
        <position position="300"/>
    </location>
</feature>
<feature type="mutagenesis site" description="Increases Km for Na(+)." evidence="18">
    <original>K</original>
    <variation>C</variation>
    <location>
        <position position="300"/>
    </location>
</feature>
<feature type="mutagenesis site" description="Retains 52% of Na(+)/H(+) antiporter activity and 88% of Li(+)/H(+) antiporter activity. Increases Km for Na(+) and Li(+). Does not affect pH-sensitivity. Decreases thermal stability." evidence="13 18">
    <original>K</original>
    <variation>H</variation>
    <location>
        <position position="300"/>
    </location>
</feature>
<feature type="mutagenesis site" description="Loss of Na(+)/H(+) antiporter activity." evidence="18">
    <original>K</original>
    <variation>L</variation>
    <location>
        <position position="300"/>
    </location>
</feature>
<feature type="mutagenesis site" description="Does not affect growth with Na(+) at pH 7, but shows a moderate reduction in growth with Li(+). Growth is decreased by 3 orders of magnitude under high-Na(+) conditions at pH 8.2. Does not affect Na(+)/H(+) and Li(+)/H(+) antiporter activities, but shows an increased Km for Li(+). Decreases thermal stability. Still active and electrogenic; when associated with N-163." evidence="21">
    <original>K</original>
    <variation>Q</variation>
    <location>
        <position position="300"/>
    </location>
</feature>
<feature type="mutagenesis site" description="Retains 36% of Na(+)/H(+) antiporter activity and 93% of Li(+)/H(+) antiporter activity. Cannot grow on high Na(+) at pH 8.3. Increases Km for Na(+) and Li(+). The pH profile is shifted to the alkaline side by one pH unit. Decreases thermal stability." evidence="13 18">
    <original>K</original>
    <variation>R</variation>
    <location>
        <position position="300"/>
    </location>
</feature>
<feature type="mutagenesis site" description="Loss of pH sensitivity." evidence="3">
    <original>G</original>
    <variation>S</variation>
    <location>
        <position position="338"/>
    </location>
</feature>
<feature type="helix" evidence="52">
    <location>
        <begin position="11"/>
        <end position="28"/>
    </location>
</feature>
<feature type="turn" evidence="52">
    <location>
        <begin position="32"/>
        <end position="34"/>
    </location>
</feature>
<feature type="helix" evidence="52">
    <location>
        <begin position="35"/>
        <end position="42"/>
    </location>
</feature>
<feature type="strand" evidence="52">
    <location>
        <begin position="45"/>
        <end position="47"/>
    </location>
</feature>
<feature type="strand" evidence="52">
    <location>
        <begin position="56"/>
        <end position="58"/>
    </location>
</feature>
<feature type="helix" evidence="52">
    <location>
        <begin position="59"/>
        <end position="84"/>
    </location>
</feature>
<feature type="strand" evidence="53">
    <location>
        <begin position="85"/>
        <end position="88"/>
    </location>
</feature>
<feature type="helix" evidence="52">
    <location>
        <begin position="91"/>
        <end position="116"/>
    </location>
</feature>
<feature type="helix" evidence="52">
    <location>
        <begin position="122"/>
        <end position="125"/>
    </location>
</feature>
<feature type="helix" evidence="52">
    <location>
        <begin position="128"/>
        <end position="130"/>
    </location>
</feature>
<feature type="helix" evidence="52">
    <location>
        <begin position="134"/>
        <end position="142"/>
    </location>
</feature>
<feature type="helix" evidence="52">
    <location>
        <begin position="143"/>
        <end position="147"/>
    </location>
</feature>
<feature type="helix" evidence="52">
    <location>
        <begin position="150"/>
        <end position="174"/>
    </location>
</feature>
<feature type="helix" evidence="52">
    <location>
        <begin position="176"/>
        <end position="178"/>
    </location>
</feature>
<feature type="helix" evidence="52">
    <location>
        <begin position="181"/>
        <end position="200"/>
    </location>
</feature>
<feature type="helix" evidence="52">
    <location>
        <begin position="205"/>
        <end position="218"/>
    </location>
</feature>
<feature type="turn" evidence="52">
    <location>
        <begin position="219"/>
        <end position="221"/>
    </location>
</feature>
<feature type="helix" evidence="52">
    <location>
        <begin position="223"/>
        <end position="236"/>
    </location>
</feature>
<feature type="helix" evidence="51">
    <location>
        <begin position="241"/>
        <end position="243"/>
    </location>
</feature>
<feature type="helix" evidence="52">
    <location>
        <begin position="247"/>
        <end position="261"/>
    </location>
</feature>
<feature type="helix" evidence="52">
    <location>
        <begin position="263"/>
        <end position="271"/>
    </location>
</feature>
<feature type="strand" evidence="51">
    <location>
        <begin position="277"/>
        <end position="279"/>
    </location>
</feature>
<feature type="helix" evidence="52">
    <location>
        <begin position="281"/>
        <end position="284"/>
    </location>
</feature>
<feature type="helix" evidence="52">
    <location>
        <begin position="287"/>
        <end position="297"/>
    </location>
</feature>
<feature type="helix" evidence="52">
    <location>
        <begin position="299"/>
        <end position="313"/>
    </location>
</feature>
<feature type="turn" evidence="51">
    <location>
        <begin position="315"/>
        <end position="317"/>
    </location>
</feature>
<feature type="helix" evidence="52">
    <location>
        <begin position="325"/>
        <end position="334"/>
    </location>
</feature>
<feature type="helix" evidence="52">
    <location>
        <begin position="339"/>
        <end position="350"/>
    </location>
</feature>
<feature type="turn" evidence="52">
    <location>
        <begin position="351"/>
        <end position="353"/>
    </location>
</feature>
<feature type="helix" evidence="52">
    <location>
        <begin position="355"/>
        <end position="383"/>
    </location>
</feature>
<evidence type="ECO:0000255" key="1">
    <source>
        <dbReference type="HAMAP-Rule" id="MF_01844"/>
    </source>
</evidence>
<evidence type="ECO:0000269" key="2">
    <source>
    </source>
</evidence>
<evidence type="ECO:0000269" key="3">
    <source>
    </source>
</evidence>
<evidence type="ECO:0000269" key="4">
    <source>
    </source>
</evidence>
<evidence type="ECO:0000269" key="5">
    <source>
    </source>
</evidence>
<evidence type="ECO:0000269" key="6">
    <source>
    </source>
</evidence>
<evidence type="ECO:0000269" key="7">
    <source>
    </source>
</evidence>
<evidence type="ECO:0000269" key="8">
    <source>
    </source>
</evidence>
<evidence type="ECO:0000269" key="9">
    <source>
    </source>
</evidence>
<evidence type="ECO:0000269" key="10">
    <source>
    </source>
</evidence>
<evidence type="ECO:0000269" key="11">
    <source>
    </source>
</evidence>
<evidence type="ECO:0000269" key="12">
    <source>
    </source>
</evidence>
<evidence type="ECO:0000269" key="13">
    <source>
    </source>
</evidence>
<evidence type="ECO:0000269" key="14">
    <source>
    </source>
</evidence>
<evidence type="ECO:0000269" key="15">
    <source>
    </source>
</evidence>
<evidence type="ECO:0000269" key="16">
    <source>
    </source>
</evidence>
<evidence type="ECO:0000269" key="17">
    <source>
    </source>
</evidence>
<evidence type="ECO:0000269" key="18">
    <source>
    </source>
</evidence>
<evidence type="ECO:0000269" key="19">
    <source>
    </source>
</evidence>
<evidence type="ECO:0000269" key="20">
    <source>
    </source>
</evidence>
<evidence type="ECO:0000269" key="21">
    <source>
    </source>
</evidence>
<evidence type="ECO:0000269" key="22">
    <source>
    </source>
</evidence>
<evidence type="ECO:0000269" key="23">
    <source>
    </source>
</evidence>
<evidence type="ECO:0000269" key="24">
    <source>
    </source>
</evidence>
<evidence type="ECO:0000269" key="25">
    <source>
    </source>
</evidence>
<evidence type="ECO:0000303" key="26">
    <source>
    </source>
</evidence>
<evidence type="ECO:0000303" key="27">
    <source>
    </source>
</evidence>
<evidence type="ECO:0000303" key="28">
    <source>
    </source>
</evidence>
<evidence type="ECO:0000303" key="29">
    <source>
    </source>
</evidence>
<evidence type="ECO:0000303" key="30">
    <source>
    </source>
</evidence>
<evidence type="ECO:0000305" key="31"/>
<evidence type="ECO:0000305" key="32">
    <source>
    </source>
</evidence>
<evidence type="ECO:0000305" key="33">
    <source>
    </source>
</evidence>
<evidence type="ECO:0000305" key="34">
    <source>
    </source>
</evidence>
<evidence type="ECO:0000305" key="35">
    <source>
    </source>
</evidence>
<evidence type="ECO:0000305" key="36">
    <source>
    </source>
</evidence>
<evidence type="ECO:0000305" key="37">
    <source>
    </source>
</evidence>
<evidence type="ECO:0000305" key="38">
    <source>
    </source>
</evidence>
<evidence type="ECO:0000305" key="39">
    <source>
    </source>
</evidence>
<evidence type="ECO:0000305" key="40">
    <source>
    </source>
</evidence>
<evidence type="ECO:0000305" key="41">
    <source>
    </source>
</evidence>
<evidence type="ECO:0000305" key="42">
    <source>
    </source>
</evidence>
<evidence type="ECO:0000305" key="43">
    <source>
    </source>
</evidence>
<evidence type="ECO:0000305" key="44">
    <source>
    </source>
</evidence>
<evidence type="ECO:0000305" key="45">
    <source>
    </source>
</evidence>
<evidence type="ECO:0000305" key="46">
    <source>
    </source>
</evidence>
<evidence type="ECO:0007744" key="47">
    <source>
        <dbReference type="PDB" id="1ZCD"/>
    </source>
</evidence>
<evidence type="ECO:0007744" key="48">
    <source>
        <dbReference type="PDB" id="3FI1"/>
    </source>
</evidence>
<evidence type="ECO:0007744" key="49">
    <source>
        <dbReference type="PDB" id="4ATV"/>
    </source>
</evidence>
<evidence type="ECO:0007744" key="50">
    <source>
        <dbReference type="PDB" id="4AU5"/>
    </source>
</evidence>
<evidence type="ECO:0007829" key="51">
    <source>
        <dbReference type="PDB" id="1ZCD"/>
    </source>
</evidence>
<evidence type="ECO:0007829" key="52">
    <source>
        <dbReference type="PDB" id="7S24"/>
    </source>
</evidence>
<evidence type="ECO:0007829" key="53">
    <source>
        <dbReference type="PDB" id="8PS0"/>
    </source>
</evidence>
<protein>
    <recommendedName>
        <fullName evidence="28">Na(+)/H(+) antiporter NhaA</fullName>
    </recommendedName>
    <alternativeName>
        <fullName evidence="27">Na(+)/H(+) exchanger</fullName>
    </alternativeName>
    <alternativeName>
        <fullName evidence="30">Na(+)/Li(+)/H(+) antiporter</fullName>
    </alternativeName>
    <alternativeName>
        <fullName evidence="31">Sodium/proton antiporter NhaA</fullName>
    </alternativeName>
</protein>
<sequence>MKHLHRFFSSDASGGIILIIAAILAMIMANSGATSGWYHDFLETPVQLRVGSLEINKNMLLWINDALMAVFFLLVGLEVKRELMQGSLASLRQAAFPVIAAIGGMIVPALLYLAFNYADPITREGWAIPAATDIAFALGVLALLGSRVPLALKIFLMALAIIDDLGAIIIIALFYTNDLSMASLGVAAVAIAVLAVLNLCGARRTGVYILVGVVLWTAVLKSGVHATLAGVIVGFFIPLKEKHGRSPAKRLEHVLHPWVAYLILPLFAFANAGVSLQGVTLDGLTSILPLGIIAGLLIGKPLGISLFCWLALRLKLAHLPEGTTYQQIMVVGILCGIGFTMSIFIASLAFGSVDPELINWAKLGILVGSISSAVIGYSWLRVRLRPSV</sequence>